<evidence type="ECO:0000250" key="1"/>
<evidence type="ECO:0000255" key="2">
    <source>
        <dbReference type="PROSITE-ProRule" id="PRU00033"/>
    </source>
</evidence>
<evidence type="ECO:0000256" key="3">
    <source>
        <dbReference type="SAM" id="MobiDB-lite"/>
    </source>
</evidence>
<evidence type="ECO:0000305" key="4"/>
<comment type="function">
    <text evidence="1">Catalyzes the formation of phosphodiester linkages between 5'-phosphoryl and 3'-hydroxyl groups in double-stranded DNA using NAD as a coenzyme and as the energy source for the reaction.</text>
</comment>
<comment type="catalytic activity">
    <reaction>
        <text>NAD(+) + (deoxyribonucleotide)n-3'-hydroxyl + 5'-phospho-(deoxyribonucleotide)m = (deoxyribonucleotide)n+m + AMP + beta-nicotinamide D-nucleotide.</text>
        <dbReference type="EC" id="6.5.1.2"/>
    </reaction>
</comment>
<comment type="similarity">
    <text evidence="4">Belongs to the NAD-dependent DNA ligase family.</text>
</comment>
<gene>
    <name type="ORF">IIV3-052L</name>
</gene>
<protein>
    <recommendedName>
        <fullName>Putative DNA ligase 052L</fullName>
        <ecNumber>6.5.1.2</ecNumber>
    </recommendedName>
</protein>
<sequence>MYDPQFEKYNQLLKLKEKADKAYYNGVGDPIMSDEEYDNLVDYMDELNPDGGVKTKVGASPSRSKSVKLPMPMNSLDKIKTQHEFDNWMKNWKPKAMLLVKEKLDGVSCLAVFTLEQNKPPKIELFTRGDGTTGTNITRLLNHGLKVGNDYCFDDMVNEDKWTTDWGCYLNAEAIDHWKKLPVKKVYIRGELIVTRKNFQTWYSNRFMNARNLVSGQVNKKSPDPKILQDIDFVPYDLVIDLKRPTMTHEVEHLLFRMIGATPVYTRFLFLSDTISTESMADYLERRKEKSDYEIDGLVIQVDDDTLFAPPDNRNPKDTVAFKIMGTTARTTVTHVEWNLSKGSKYKPTIHITPVSLSGVTISKVTGFHGKYISENKIGKGAVVLITRSGEVIPHIVSVISPAAKQDVLLPSNGVWKGVDIYYDGAEEPREITVKKMVHFFTSLGCLGLKTMTVGRLYDAGYRTVEAIVGADTKKLVLINGFRMVAQKLLPSMWVNVAKATPHELMAALNAFGEGIGLRKIQNIDCSKPEALEVIGMTKKTVETRIWPIWNDVLARVNALSRMAKSQLRKQETGSCEPEEDDDYNFGSYHPCHMPCQSSNKIWECRSRSPSAAGSASPCRPTKRRDDWFDSSESSCATETCVVESPPKKRPPMQGYVFVFTRFRDKDLERQITALGGKVLNNVNQNVTHVITKEKGPYKKPYTGKLKFALDNNLFVWSLVHLKSIVADEQEKLKRQRKCRARSPSPCGTACSTERD</sequence>
<organism>
    <name type="scientific">Invertebrate iridescent virus 3</name>
    <name type="common">IIV-3</name>
    <name type="synonym">Mosquito iridescent virus</name>
    <dbReference type="NCBI Taxonomy" id="345201"/>
    <lineage>
        <taxon>Viruses</taxon>
        <taxon>Varidnaviria</taxon>
        <taxon>Bamfordvirae</taxon>
        <taxon>Nucleocytoviricota</taxon>
        <taxon>Megaviricetes</taxon>
        <taxon>Pimascovirales</taxon>
        <taxon>Iridoviridae</taxon>
        <taxon>Betairidovirinae</taxon>
        <taxon>Chloriridovirus</taxon>
    </lineage>
</organism>
<feature type="chain" id="PRO_0000376961" description="Putative DNA ligase 052L">
    <location>
        <begin position="1"/>
        <end position="756"/>
    </location>
</feature>
<feature type="domain" description="BRCT" evidence="2">
    <location>
        <begin position="648"/>
        <end position="742"/>
    </location>
</feature>
<feature type="region of interest" description="Disordered" evidence="3">
    <location>
        <begin position="610"/>
        <end position="630"/>
    </location>
</feature>
<feature type="compositionally biased region" description="Low complexity" evidence="3">
    <location>
        <begin position="610"/>
        <end position="620"/>
    </location>
</feature>
<feature type="active site" description="N6-AMP-lysine intermediate" evidence="1">
    <location>
        <position position="103"/>
    </location>
</feature>
<keyword id="KW-0235">DNA replication</keyword>
<keyword id="KW-0436">Ligase</keyword>
<keyword id="KW-0520">NAD</keyword>
<keyword id="KW-1185">Reference proteome</keyword>
<organismHost>
    <name type="scientific">Aedes vexans</name>
    <name type="common">Inland floodwater mosquito</name>
    <name type="synonym">Culex vexans</name>
    <dbReference type="NCBI Taxonomy" id="7163"/>
</organismHost>
<organismHost>
    <name type="scientific">Culex territans</name>
    <dbReference type="NCBI Taxonomy" id="42431"/>
</organismHost>
<organismHost>
    <name type="scientific">Culiseta annulata</name>
    <dbReference type="NCBI Taxonomy" id="332058"/>
</organismHost>
<organismHost>
    <name type="scientific">Ochlerotatus sollicitans</name>
    <name type="common">eastern saltmarsh mosquito</name>
    <dbReference type="NCBI Taxonomy" id="310513"/>
</organismHost>
<organismHost>
    <name type="scientific">Ochlerotatus taeniorhynchus</name>
    <name type="common">Black salt marsh mosquito</name>
    <name type="synonym">Aedes taeniorhynchus</name>
    <dbReference type="NCBI Taxonomy" id="329105"/>
</organismHost>
<organismHost>
    <name type="scientific">Psorophora ferox</name>
    <dbReference type="NCBI Taxonomy" id="7183"/>
</organismHost>
<name>VF205_IIV3</name>
<proteinExistence type="inferred from homology"/>
<reference key="1">
    <citation type="journal article" date="2006" name="J. Virol.">
        <title>Genome of invertebrate iridescent virus type 3 (mosquito iridescent virus).</title>
        <authorList>
            <person name="Delhon G."/>
            <person name="Tulman E.R."/>
            <person name="Afonso C.L."/>
            <person name="Lu Z."/>
            <person name="Becnel J.J."/>
            <person name="Moser B.A."/>
            <person name="Kutish G.F."/>
            <person name="Rock D.L."/>
        </authorList>
    </citation>
    <scope>NUCLEOTIDE SEQUENCE [LARGE SCALE GENOMIC DNA]</scope>
</reference>
<dbReference type="EC" id="6.5.1.2"/>
<dbReference type="EMBL" id="DQ643392">
    <property type="protein sequence ID" value="ABF82082.1"/>
    <property type="molecule type" value="Genomic_DNA"/>
</dbReference>
<dbReference type="RefSeq" id="YP_654624.1">
    <property type="nucleotide sequence ID" value="NC_008187.1"/>
</dbReference>
<dbReference type="SMR" id="Q197A8"/>
<dbReference type="KEGG" id="vg:4156302"/>
<dbReference type="OrthoDB" id="2744at10239"/>
<dbReference type="Proteomes" id="UP000001358">
    <property type="component" value="Genome"/>
</dbReference>
<dbReference type="GO" id="GO:0003911">
    <property type="term" value="F:DNA ligase (NAD+) activity"/>
    <property type="evidence" value="ECO:0007669"/>
    <property type="project" value="UniProtKB-EC"/>
</dbReference>
<dbReference type="GO" id="GO:0006281">
    <property type="term" value="P:DNA repair"/>
    <property type="evidence" value="ECO:0007669"/>
    <property type="project" value="InterPro"/>
</dbReference>
<dbReference type="GO" id="GO:0006260">
    <property type="term" value="P:DNA replication"/>
    <property type="evidence" value="ECO:0007669"/>
    <property type="project" value="UniProtKB-KW"/>
</dbReference>
<dbReference type="CDD" id="cd00027">
    <property type="entry name" value="BRCT"/>
    <property type="match status" value="1"/>
</dbReference>
<dbReference type="Gene3D" id="3.40.50.10190">
    <property type="entry name" value="BRCT domain"/>
    <property type="match status" value="1"/>
</dbReference>
<dbReference type="Gene3D" id="3.30.470.30">
    <property type="entry name" value="DNA ligase/mRNA capping enzyme"/>
    <property type="match status" value="1"/>
</dbReference>
<dbReference type="Gene3D" id="2.40.50.140">
    <property type="entry name" value="Nucleic acid-binding proteins"/>
    <property type="match status" value="1"/>
</dbReference>
<dbReference type="InterPro" id="IPR001357">
    <property type="entry name" value="BRCT_dom"/>
</dbReference>
<dbReference type="InterPro" id="IPR036420">
    <property type="entry name" value="BRCT_dom_sf"/>
</dbReference>
<dbReference type="InterPro" id="IPR013839">
    <property type="entry name" value="DNAligase_adenylation"/>
</dbReference>
<dbReference type="InterPro" id="IPR013840">
    <property type="entry name" value="DNAligase_N"/>
</dbReference>
<dbReference type="InterPro" id="IPR012340">
    <property type="entry name" value="NA-bd_OB-fold"/>
</dbReference>
<dbReference type="InterPro" id="IPR004150">
    <property type="entry name" value="NAD_DNA_ligase_OB"/>
</dbReference>
<dbReference type="Pfam" id="PF00533">
    <property type="entry name" value="BRCT"/>
    <property type="match status" value="1"/>
</dbReference>
<dbReference type="Pfam" id="PF01653">
    <property type="entry name" value="DNA_ligase_aden"/>
    <property type="match status" value="1"/>
</dbReference>
<dbReference type="Pfam" id="PF03120">
    <property type="entry name" value="DNA_ligase_OB"/>
    <property type="match status" value="1"/>
</dbReference>
<dbReference type="SMART" id="SM00292">
    <property type="entry name" value="BRCT"/>
    <property type="match status" value="1"/>
</dbReference>
<dbReference type="SMART" id="SM00532">
    <property type="entry name" value="LIGANc"/>
    <property type="match status" value="1"/>
</dbReference>
<dbReference type="SUPFAM" id="SSF52113">
    <property type="entry name" value="BRCT domain"/>
    <property type="match status" value="1"/>
</dbReference>
<dbReference type="SUPFAM" id="SSF56091">
    <property type="entry name" value="DNA ligase/mRNA capping enzyme, catalytic domain"/>
    <property type="match status" value="1"/>
</dbReference>
<dbReference type="SUPFAM" id="SSF50249">
    <property type="entry name" value="Nucleic acid-binding proteins"/>
    <property type="match status" value="1"/>
</dbReference>
<dbReference type="PROSITE" id="PS50172">
    <property type="entry name" value="BRCT"/>
    <property type="match status" value="1"/>
</dbReference>
<accession>Q197A8</accession>